<dbReference type="EMBL" id="X05952">
    <property type="protein sequence ID" value="CAA29385.1"/>
    <property type="molecule type" value="Genomic_DNA"/>
</dbReference>
<dbReference type="PIR" id="S03412">
    <property type="entry name" value="S03412"/>
</dbReference>
<dbReference type="SMR" id="P16940"/>
<dbReference type="STRING" id="216599.GCA_000283715_00303"/>
<dbReference type="GO" id="GO:0003676">
    <property type="term" value="F:nucleic acid binding"/>
    <property type="evidence" value="ECO:0007669"/>
    <property type="project" value="InterPro"/>
</dbReference>
<dbReference type="GO" id="GO:0015074">
    <property type="term" value="P:DNA integration"/>
    <property type="evidence" value="ECO:0007669"/>
    <property type="project" value="InterPro"/>
</dbReference>
<dbReference type="Gene3D" id="3.30.420.10">
    <property type="entry name" value="Ribonuclease H-like superfamily/Ribonuclease H"/>
    <property type="match status" value="1"/>
</dbReference>
<dbReference type="InterPro" id="IPR025948">
    <property type="entry name" value="HTH-like_dom"/>
</dbReference>
<dbReference type="InterPro" id="IPR001584">
    <property type="entry name" value="Integrase_cat-core"/>
</dbReference>
<dbReference type="InterPro" id="IPR012337">
    <property type="entry name" value="RNaseH-like_sf"/>
</dbReference>
<dbReference type="InterPro" id="IPR036397">
    <property type="entry name" value="RNaseH_sf"/>
</dbReference>
<dbReference type="InterPro" id="IPR048020">
    <property type="entry name" value="Transpos_IS3"/>
</dbReference>
<dbReference type="InterPro" id="IPR050900">
    <property type="entry name" value="Transposase_IS3/IS150/IS904"/>
</dbReference>
<dbReference type="NCBIfam" id="NF033516">
    <property type="entry name" value="transpos_IS3"/>
    <property type="match status" value="1"/>
</dbReference>
<dbReference type="PANTHER" id="PTHR46889">
    <property type="entry name" value="TRANSPOSASE INSF FOR INSERTION SEQUENCE IS3B-RELATED"/>
    <property type="match status" value="1"/>
</dbReference>
<dbReference type="PANTHER" id="PTHR46889:SF4">
    <property type="entry name" value="TRANSPOSASE INSO FOR INSERTION SEQUENCE ELEMENT IS911B-RELATED"/>
    <property type="match status" value="1"/>
</dbReference>
<dbReference type="Pfam" id="PF13276">
    <property type="entry name" value="HTH_21"/>
    <property type="match status" value="1"/>
</dbReference>
<dbReference type="Pfam" id="PF00665">
    <property type="entry name" value="rve"/>
    <property type="match status" value="1"/>
</dbReference>
<dbReference type="Pfam" id="PF13333">
    <property type="entry name" value="rve_2"/>
    <property type="match status" value="1"/>
</dbReference>
<dbReference type="SUPFAM" id="SSF53098">
    <property type="entry name" value="Ribonuclease H-like"/>
    <property type="match status" value="1"/>
</dbReference>
<dbReference type="PROSITE" id="PS50994">
    <property type="entry name" value="INTEGRASE"/>
    <property type="match status" value="1"/>
</dbReference>
<accession>P16940</accession>
<protein>
    <recommendedName>
        <fullName>Insertion element IS600 uncharacterized 31 kDa protein</fullName>
    </recommendedName>
    <alternativeName>
        <fullName>ISO-S3 31 kDa protein</fullName>
    </alternativeName>
</protein>
<name>YIS2_SHISO</name>
<evidence type="ECO:0000255" key="1">
    <source>
        <dbReference type="PROSITE-ProRule" id="PRU00457"/>
    </source>
</evidence>
<organism>
    <name type="scientific">Shigella sonnei</name>
    <dbReference type="NCBI Taxonomy" id="624"/>
    <lineage>
        <taxon>Bacteria</taxon>
        <taxon>Pseudomonadati</taxon>
        <taxon>Pseudomonadota</taxon>
        <taxon>Gammaproteobacteria</taxon>
        <taxon>Enterobacterales</taxon>
        <taxon>Enterobacteriaceae</taxon>
        <taxon>Shigella</taxon>
    </lineage>
</organism>
<sequence>MCQVFGVSRSGYYNWVQHEPSDRKQSDERLKLEIKVAHIRTRETYGTRRLQTELAENGIIVGRDRLARLRKELRLRCKQKRKFRATTNSNHNLPVAPNLLNQTFAPTAPNQVWVADLTYVATQEGWLYLAGIKDVYTCEIVRYAMGERMTKELTGKALFMALRSQRPPAGLIHHSDRGSQYCAYDYRVIQEQSGLKTSMSRKGNCYDNAPMESFWGTLKNESLSHYRFNNRDEAISVIREYIEIFYNRQRRHSRLGNISPAAFREKYHQMAA</sequence>
<reference key="1">
    <citation type="journal article" date="1987" name="J. Mol. Biol.">
        <title>Isolation and characterization of IS elements repeated in the bacterial chromosome.</title>
        <authorList>
            <person name="Matsutani S."/>
            <person name="Ohtsubo H."/>
            <person name="Maeda Y."/>
            <person name="Ohtsubo E."/>
        </authorList>
    </citation>
    <scope>NUCLEOTIDE SEQUENCE [GENOMIC DNA]</scope>
</reference>
<keyword id="KW-0814">Transposable element</keyword>
<proteinExistence type="predicted"/>
<feature type="chain" id="PRO_0000075501" description="Insertion element IS600 uncharacterized 31 kDa protein">
    <location>
        <begin position="1"/>
        <end position="272"/>
    </location>
</feature>
<feature type="domain" description="Integrase catalytic" evidence="1">
    <location>
        <begin position="105"/>
        <end position="268"/>
    </location>
</feature>